<gene>
    <name evidence="1" type="primary">kdpB</name>
    <name type="ordered locus">CLH_0916</name>
</gene>
<feature type="chain" id="PRO_1000114949" description="Potassium-transporting ATPase ATP-binding subunit">
    <location>
        <begin position="1"/>
        <end position="688"/>
    </location>
</feature>
<feature type="transmembrane region" description="Helical" evidence="1">
    <location>
        <begin position="37"/>
        <end position="57"/>
    </location>
</feature>
<feature type="transmembrane region" description="Helical" evidence="1">
    <location>
        <begin position="65"/>
        <end position="85"/>
    </location>
</feature>
<feature type="transmembrane region" description="Helical" evidence="1">
    <location>
        <begin position="219"/>
        <end position="239"/>
    </location>
</feature>
<feature type="transmembrane region" description="Helical" evidence="1">
    <location>
        <begin position="262"/>
        <end position="282"/>
    </location>
</feature>
<feature type="transmembrane region" description="Helical" evidence="1">
    <location>
        <begin position="594"/>
        <end position="614"/>
    </location>
</feature>
<feature type="transmembrane region" description="Helical" evidence="1">
    <location>
        <begin position="622"/>
        <end position="642"/>
    </location>
</feature>
<feature type="transmembrane region" description="Helical" evidence="1">
    <location>
        <begin position="668"/>
        <end position="688"/>
    </location>
</feature>
<feature type="active site" description="4-aspartylphosphate intermediate" evidence="1">
    <location>
        <position position="313"/>
    </location>
</feature>
<feature type="binding site" evidence="1">
    <location>
        <position position="350"/>
    </location>
    <ligand>
        <name>ATP</name>
        <dbReference type="ChEBI" id="CHEBI:30616"/>
    </ligand>
</feature>
<feature type="binding site" evidence="1">
    <location>
        <position position="354"/>
    </location>
    <ligand>
        <name>ATP</name>
        <dbReference type="ChEBI" id="CHEBI:30616"/>
    </ligand>
</feature>
<feature type="binding site" evidence="1">
    <location>
        <begin position="383"/>
        <end position="390"/>
    </location>
    <ligand>
        <name>ATP</name>
        <dbReference type="ChEBI" id="CHEBI:30616"/>
    </ligand>
</feature>
<feature type="binding site" evidence="1">
    <location>
        <position position="401"/>
    </location>
    <ligand>
        <name>ATP</name>
        <dbReference type="ChEBI" id="CHEBI:30616"/>
    </ligand>
</feature>
<feature type="binding site" evidence="1">
    <location>
        <position position="524"/>
    </location>
    <ligand>
        <name>Mg(2+)</name>
        <dbReference type="ChEBI" id="CHEBI:18420"/>
    </ligand>
</feature>
<feature type="binding site" evidence="1">
    <location>
        <position position="528"/>
    </location>
    <ligand>
        <name>Mg(2+)</name>
        <dbReference type="ChEBI" id="CHEBI:18420"/>
    </ligand>
</feature>
<sequence length="688" mass="73100">MNENKGNFANKKMIKRAIKDSFIKLSPKTQMENPVMFLVYISSILTTILYAVSLVGIRDSKSSFILGITIILWLTVLFANFAEAIAEGRGKAQADSLRAAKKDVEAHKIPSIEKRDEITKVSSALLKKGDIVIVVAGEQVPADGEVIDGAASVDESAITGESAPVIRESGGDRSAVTGGTTVISDWLIIEVTSEAGESFLDKMISMVEGAARKKTPNEIALQILLISLTIIFLLVTVSLYSYSIFSANQAGVVNPISVTSLVALLVCLAPTTIGALLSSIGIAGMSRLNQANVLAMSGRAIEAAGDVDILMLDKTGTITLGNREACEFIPVNGVNENELADAAQLSSLADETPEGRSIVVLAKEKFGIRGRNIRESNMEFIPFTAKTRMSGVNYNNSEIRKGAAETVKDYVISRGGCYSKECDEVVARISNKGGTPLVVAKDNKVLGVVYLKDIIKQGVQEKFADLRKMGIKTIMITGDNPLTAAAIAAEAGVDDFLAEATPEGKLEMIRDFQIKGHLVAMTGDGTNDAPALAQADVAVAMNTGTQAAKEAGNMVDLDSSPTKLIDIVRIGKQLLMTRGSLTTFSIANDLAKYFAIIPALFIGLYPGLSALNIMNLHSAESAIFSAIIYNALIIVALIPLALKGVKYREVSAGKLLSRNLLVYGLGGIIVPFIAIKVIDVLITAIGIV</sequence>
<dbReference type="EC" id="7.2.2.6" evidence="1"/>
<dbReference type="EMBL" id="CP001078">
    <property type="protein sequence ID" value="ACD53783.1"/>
    <property type="molecule type" value="Genomic_DNA"/>
</dbReference>
<dbReference type="RefSeq" id="WP_012451616.1">
    <property type="nucleotide sequence ID" value="NC_010723.1"/>
</dbReference>
<dbReference type="SMR" id="B2V2P3"/>
<dbReference type="KEGG" id="cbt:CLH_0916"/>
<dbReference type="HOGENOM" id="CLU_025728_2_0_9"/>
<dbReference type="GO" id="GO:0005886">
    <property type="term" value="C:plasma membrane"/>
    <property type="evidence" value="ECO:0007669"/>
    <property type="project" value="UniProtKB-SubCell"/>
</dbReference>
<dbReference type="GO" id="GO:0005524">
    <property type="term" value="F:ATP binding"/>
    <property type="evidence" value="ECO:0007669"/>
    <property type="project" value="UniProtKB-UniRule"/>
</dbReference>
<dbReference type="GO" id="GO:0016887">
    <property type="term" value="F:ATP hydrolysis activity"/>
    <property type="evidence" value="ECO:0007669"/>
    <property type="project" value="InterPro"/>
</dbReference>
<dbReference type="GO" id="GO:0000287">
    <property type="term" value="F:magnesium ion binding"/>
    <property type="evidence" value="ECO:0007669"/>
    <property type="project" value="UniProtKB-UniRule"/>
</dbReference>
<dbReference type="GO" id="GO:0008556">
    <property type="term" value="F:P-type potassium transmembrane transporter activity"/>
    <property type="evidence" value="ECO:0007669"/>
    <property type="project" value="UniProtKB-UniRule"/>
</dbReference>
<dbReference type="CDD" id="cd02078">
    <property type="entry name" value="P-type_ATPase_K"/>
    <property type="match status" value="1"/>
</dbReference>
<dbReference type="FunFam" id="2.70.150.10:FF:000010">
    <property type="entry name" value="Potassium-transporting ATPase ATP-binding subunit"/>
    <property type="match status" value="1"/>
</dbReference>
<dbReference type="FunFam" id="3.40.1110.10:FF:000007">
    <property type="entry name" value="Potassium-transporting ATPase ATP-binding subunit"/>
    <property type="match status" value="1"/>
</dbReference>
<dbReference type="Gene3D" id="3.40.1110.10">
    <property type="entry name" value="Calcium-transporting ATPase, cytoplasmic domain N"/>
    <property type="match status" value="1"/>
</dbReference>
<dbReference type="Gene3D" id="2.70.150.10">
    <property type="entry name" value="Calcium-transporting ATPase, cytoplasmic transduction domain A"/>
    <property type="match status" value="1"/>
</dbReference>
<dbReference type="Gene3D" id="3.40.50.1000">
    <property type="entry name" value="HAD superfamily/HAD-like"/>
    <property type="match status" value="1"/>
</dbReference>
<dbReference type="HAMAP" id="MF_00285">
    <property type="entry name" value="KdpB"/>
    <property type="match status" value="1"/>
</dbReference>
<dbReference type="InterPro" id="IPR023299">
    <property type="entry name" value="ATPase_P-typ_cyto_dom_N"/>
</dbReference>
<dbReference type="InterPro" id="IPR018303">
    <property type="entry name" value="ATPase_P-typ_P_site"/>
</dbReference>
<dbReference type="InterPro" id="IPR023298">
    <property type="entry name" value="ATPase_P-typ_TM_dom_sf"/>
</dbReference>
<dbReference type="InterPro" id="IPR008250">
    <property type="entry name" value="ATPase_P-typ_transduc_dom_A_sf"/>
</dbReference>
<dbReference type="InterPro" id="IPR036412">
    <property type="entry name" value="HAD-like_sf"/>
</dbReference>
<dbReference type="InterPro" id="IPR023214">
    <property type="entry name" value="HAD_sf"/>
</dbReference>
<dbReference type="InterPro" id="IPR006391">
    <property type="entry name" value="P-type_ATPase_bsu_IA"/>
</dbReference>
<dbReference type="InterPro" id="IPR001757">
    <property type="entry name" value="P_typ_ATPase"/>
</dbReference>
<dbReference type="InterPro" id="IPR044492">
    <property type="entry name" value="P_typ_ATPase_HD_dom"/>
</dbReference>
<dbReference type="NCBIfam" id="TIGR01494">
    <property type="entry name" value="ATPase_P-type"/>
    <property type="match status" value="2"/>
</dbReference>
<dbReference type="NCBIfam" id="TIGR01497">
    <property type="entry name" value="kdpB"/>
    <property type="match status" value="1"/>
</dbReference>
<dbReference type="PANTHER" id="PTHR43743">
    <property type="entry name" value="POTASSIUM-TRANSPORTING ATPASE ATP-BINDING SUBUNIT"/>
    <property type="match status" value="1"/>
</dbReference>
<dbReference type="PANTHER" id="PTHR43743:SF1">
    <property type="entry name" value="POTASSIUM-TRANSPORTING ATPASE ATP-BINDING SUBUNIT"/>
    <property type="match status" value="1"/>
</dbReference>
<dbReference type="Pfam" id="PF00122">
    <property type="entry name" value="E1-E2_ATPase"/>
    <property type="match status" value="1"/>
</dbReference>
<dbReference type="Pfam" id="PF00702">
    <property type="entry name" value="Hydrolase"/>
    <property type="match status" value="1"/>
</dbReference>
<dbReference type="PRINTS" id="PR00119">
    <property type="entry name" value="CATATPASE"/>
</dbReference>
<dbReference type="SFLD" id="SFLDG00002">
    <property type="entry name" value="C1.7:_P-type_atpase_like"/>
    <property type="match status" value="1"/>
</dbReference>
<dbReference type="SFLD" id="SFLDF00027">
    <property type="entry name" value="p-type_atpase"/>
    <property type="match status" value="1"/>
</dbReference>
<dbReference type="SUPFAM" id="SSF81653">
    <property type="entry name" value="Calcium ATPase, transduction domain A"/>
    <property type="match status" value="1"/>
</dbReference>
<dbReference type="SUPFAM" id="SSF81665">
    <property type="entry name" value="Calcium ATPase, transmembrane domain M"/>
    <property type="match status" value="1"/>
</dbReference>
<dbReference type="SUPFAM" id="SSF56784">
    <property type="entry name" value="HAD-like"/>
    <property type="match status" value="1"/>
</dbReference>
<dbReference type="PROSITE" id="PS00154">
    <property type="entry name" value="ATPASE_E1_E2"/>
    <property type="match status" value="1"/>
</dbReference>
<keyword id="KW-0067">ATP-binding</keyword>
<keyword id="KW-1003">Cell membrane</keyword>
<keyword id="KW-0406">Ion transport</keyword>
<keyword id="KW-0460">Magnesium</keyword>
<keyword id="KW-0472">Membrane</keyword>
<keyword id="KW-0479">Metal-binding</keyword>
<keyword id="KW-0547">Nucleotide-binding</keyword>
<keyword id="KW-0597">Phosphoprotein</keyword>
<keyword id="KW-0630">Potassium</keyword>
<keyword id="KW-0633">Potassium transport</keyword>
<keyword id="KW-1278">Translocase</keyword>
<keyword id="KW-0812">Transmembrane</keyword>
<keyword id="KW-1133">Transmembrane helix</keyword>
<keyword id="KW-0813">Transport</keyword>
<accession>B2V2P3</accession>
<evidence type="ECO:0000255" key="1">
    <source>
        <dbReference type="HAMAP-Rule" id="MF_00285"/>
    </source>
</evidence>
<proteinExistence type="inferred from homology"/>
<organism>
    <name type="scientific">Clostridium botulinum (strain Alaska E43 / Type E3)</name>
    <dbReference type="NCBI Taxonomy" id="508767"/>
    <lineage>
        <taxon>Bacteria</taxon>
        <taxon>Bacillati</taxon>
        <taxon>Bacillota</taxon>
        <taxon>Clostridia</taxon>
        <taxon>Eubacteriales</taxon>
        <taxon>Clostridiaceae</taxon>
        <taxon>Clostridium</taxon>
    </lineage>
</organism>
<protein>
    <recommendedName>
        <fullName evidence="1">Potassium-transporting ATPase ATP-binding subunit</fullName>
        <ecNumber evidence="1">7.2.2.6</ecNumber>
    </recommendedName>
    <alternativeName>
        <fullName evidence="1">ATP phosphohydrolase [potassium-transporting] B chain</fullName>
    </alternativeName>
    <alternativeName>
        <fullName evidence="1">Potassium-binding and translocating subunit B</fullName>
    </alternativeName>
    <alternativeName>
        <fullName evidence="1">Potassium-translocating ATPase B chain</fullName>
    </alternativeName>
</protein>
<comment type="function">
    <text evidence="1">Part of the high-affinity ATP-driven potassium transport (or Kdp) system, which catalyzes the hydrolysis of ATP coupled with the electrogenic transport of potassium into the cytoplasm. This subunit is responsible for energy coupling to the transport system and for the release of the potassium ions to the cytoplasm.</text>
</comment>
<comment type="catalytic activity">
    <reaction evidence="1">
        <text>K(+)(out) + ATP + H2O = K(+)(in) + ADP + phosphate + H(+)</text>
        <dbReference type="Rhea" id="RHEA:16777"/>
        <dbReference type="ChEBI" id="CHEBI:15377"/>
        <dbReference type="ChEBI" id="CHEBI:15378"/>
        <dbReference type="ChEBI" id="CHEBI:29103"/>
        <dbReference type="ChEBI" id="CHEBI:30616"/>
        <dbReference type="ChEBI" id="CHEBI:43474"/>
        <dbReference type="ChEBI" id="CHEBI:456216"/>
        <dbReference type="EC" id="7.2.2.6"/>
    </reaction>
    <physiologicalReaction direction="left-to-right" evidence="1">
        <dbReference type="Rhea" id="RHEA:16778"/>
    </physiologicalReaction>
</comment>
<comment type="subunit">
    <text evidence="1">The system is composed of three essential subunits: KdpA, KdpB and KdpC.</text>
</comment>
<comment type="subcellular location">
    <subcellularLocation>
        <location evidence="1">Cell membrane</location>
        <topology evidence="1">Multi-pass membrane protein</topology>
    </subcellularLocation>
</comment>
<comment type="similarity">
    <text evidence="1">Belongs to the cation transport ATPase (P-type) (TC 3.A.3) family. Type IA subfamily.</text>
</comment>
<name>KDPB_CLOBA</name>
<reference key="1">
    <citation type="submission" date="2008-05" db="EMBL/GenBank/DDBJ databases">
        <title>Complete genome sequence of Clostridium botulinum E3 str. Alaska E43.</title>
        <authorList>
            <person name="Brinkac L.M."/>
            <person name="Brown J.L."/>
            <person name="Bruce D."/>
            <person name="Detter C."/>
            <person name="Munk C."/>
            <person name="Smith L.A."/>
            <person name="Smith T.J."/>
            <person name="Sutton G."/>
            <person name="Brettin T.S."/>
        </authorList>
    </citation>
    <scope>NUCLEOTIDE SEQUENCE [LARGE SCALE GENOMIC DNA]</scope>
    <source>
        <strain>Alaska E43 / Type E3</strain>
    </source>
</reference>